<feature type="chain" id="PRO_0000222471" description="Initiator protein NS1">
    <location>
        <begin position="1"/>
        <end position="860"/>
    </location>
</feature>
<feature type="domain" description="PV NS1-Nuc" evidence="5">
    <location>
        <begin position="1"/>
        <end position="145"/>
    </location>
</feature>
<feature type="domain" description="SF3 helicase" evidence="4">
    <location>
        <begin position="418"/>
        <end position="573"/>
    </location>
</feature>
<feature type="region of interest" description="Ori-binding" evidence="2">
    <location>
        <begin position="201"/>
        <end position="205"/>
    </location>
</feature>
<feature type="region of interest" description="Transactivation" evidence="2">
    <location>
        <begin position="629"/>
        <end position="858"/>
    </location>
</feature>
<feature type="region of interest" description="Disordered" evidence="6">
    <location>
        <begin position="641"/>
        <end position="696"/>
    </location>
</feature>
<feature type="region of interest" description="Disordered" evidence="6">
    <location>
        <begin position="728"/>
        <end position="860"/>
    </location>
</feature>
<feature type="short sequence motif" description="RCR-3" evidence="5">
    <location>
        <begin position="85"/>
        <end position="89"/>
    </location>
</feature>
<feature type="compositionally biased region" description="Acidic residues" evidence="6">
    <location>
        <begin position="643"/>
        <end position="653"/>
    </location>
</feature>
<feature type="compositionally biased region" description="Polar residues" evidence="6">
    <location>
        <begin position="663"/>
        <end position="688"/>
    </location>
</feature>
<feature type="compositionally biased region" description="Basic and acidic residues" evidence="6">
    <location>
        <begin position="741"/>
        <end position="750"/>
    </location>
</feature>
<feature type="compositionally biased region" description="Acidic residues" evidence="6">
    <location>
        <begin position="803"/>
        <end position="813"/>
    </location>
</feature>
<feature type="active site" description="For nuclease activity" evidence="5">
    <location>
        <position position="219"/>
    </location>
</feature>
<feature type="binding site" evidence="4">
    <location>
        <begin position="444"/>
        <end position="451"/>
    </location>
    <ligand>
        <name>ATP</name>
        <dbReference type="ChEBI" id="CHEBI:30616"/>
    </ligand>
</feature>
<feature type="splice variant" id="VSP_061959" description="In isoform NS2.">
    <location>
        <begin position="1"/>
        <end position="283"/>
    </location>
</feature>
<dbReference type="EC" id="3.1.21.-" evidence="3"/>
<dbReference type="EC" id="3.6.4.12" evidence="3"/>
<dbReference type="EMBL" id="M14363">
    <property type="protein sequence ID" value="AAB59845.1"/>
    <property type="status" value="ALT_SEQ"/>
    <property type="molecule type" value="Genomic_DNA"/>
</dbReference>
<dbReference type="EMBL" id="DQ335247">
    <property type="protein sequence ID" value="ABC69727.1"/>
    <property type="molecule type" value="Genomic_DNA"/>
</dbReference>
<dbReference type="EMBL" id="DQ335247">
    <property type="protein sequence ID" value="ABC69730.1"/>
    <property type="molecule type" value="Genomic_DNA"/>
</dbReference>
<dbReference type="PIR" id="C26104">
    <property type="entry name" value="UYPVS1"/>
</dbReference>
<dbReference type="RefSeq" id="NP_041402.1">
    <property type="nucleotide sequence ID" value="NC_001540.1"/>
</dbReference>
<dbReference type="SMR" id="P07296"/>
<dbReference type="KEGG" id="vg:1724585"/>
<dbReference type="OrthoDB" id="2007at10239"/>
<dbReference type="Proteomes" id="UP000007022">
    <property type="component" value="Segment"/>
</dbReference>
<dbReference type="Proteomes" id="UP000170734">
    <property type="component" value="Segment"/>
</dbReference>
<dbReference type="GO" id="GO:0042025">
    <property type="term" value="C:host cell nucleus"/>
    <property type="evidence" value="ECO:0007669"/>
    <property type="project" value="UniProtKB-SubCell"/>
</dbReference>
<dbReference type="GO" id="GO:0005524">
    <property type="term" value="F:ATP binding"/>
    <property type="evidence" value="ECO:0007669"/>
    <property type="project" value="UniProtKB-KW"/>
</dbReference>
<dbReference type="GO" id="GO:0016887">
    <property type="term" value="F:ATP hydrolysis activity"/>
    <property type="evidence" value="ECO:0007669"/>
    <property type="project" value="RHEA"/>
</dbReference>
<dbReference type="GO" id="GO:0003677">
    <property type="term" value="F:DNA binding"/>
    <property type="evidence" value="ECO:0007669"/>
    <property type="project" value="UniProtKB-KW"/>
</dbReference>
<dbReference type="GO" id="GO:0004519">
    <property type="term" value="F:endonuclease activity"/>
    <property type="evidence" value="ECO:0007669"/>
    <property type="project" value="UniProtKB-KW"/>
</dbReference>
<dbReference type="GO" id="GO:0004386">
    <property type="term" value="F:helicase activity"/>
    <property type="evidence" value="ECO:0007669"/>
    <property type="project" value="UniProtKB-KW"/>
</dbReference>
<dbReference type="GO" id="GO:0046872">
    <property type="term" value="F:metal ion binding"/>
    <property type="evidence" value="ECO:0007669"/>
    <property type="project" value="UniProtKB-KW"/>
</dbReference>
<dbReference type="GO" id="GO:0006260">
    <property type="term" value="P:DNA replication"/>
    <property type="evidence" value="ECO:0007669"/>
    <property type="project" value="UniProtKB-KW"/>
</dbReference>
<dbReference type="GO" id="GO:0039693">
    <property type="term" value="P:viral DNA genome replication"/>
    <property type="evidence" value="ECO:0007669"/>
    <property type="project" value="UniProtKB-KW"/>
</dbReference>
<dbReference type="Gene3D" id="3.40.1310.20">
    <property type="match status" value="1"/>
</dbReference>
<dbReference type="Gene3D" id="3.40.50.300">
    <property type="entry name" value="P-loop containing nucleotide triphosphate hydrolases"/>
    <property type="match status" value="1"/>
</dbReference>
<dbReference type="InterPro" id="IPR054766">
    <property type="entry name" value="BoV_NS1-like_N"/>
</dbReference>
<dbReference type="InterPro" id="IPR014015">
    <property type="entry name" value="Helicase_SF3_DNA-vir"/>
</dbReference>
<dbReference type="InterPro" id="IPR027417">
    <property type="entry name" value="P-loop_NTPase"/>
</dbReference>
<dbReference type="InterPro" id="IPR001257">
    <property type="entry name" value="Parvovirus_NS1_helicase"/>
</dbReference>
<dbReference type="InterPro" id="IPR049901">
    <property type="entry name" value="PV_NS1-NUC"/>
</dbReference>
<dbReference type="Pfam" id="PF22419">
    <property type="entry name" value="HBoV_NS1-like_N"/>
    <property type="match status" value="1"/>
</dbReference>
<dbReference type="Pfam" id="PF01057">
    <property type="entry name" value="Parvo_NS1"/>
    <property type="match status" value="1"/>
</dbReference>
<dbReference type="SUPFAM" id="SSF52540">
    <property type="entry name" value="P-loop containing nucleoside triphosphate hydrolases"/>
    <property type="match status" value="1"/>
</dbReference>
<dbReference type="PROSITE" id="PS52022">
    <property type="entry name" value="PV_NS1_NUC"/>
    <property type="match status" value="1"/>
</dbReference>
<dbReference type="PROSITE" id="PS51206">
    <property type="entry name" value="SF3_HELICASE_1"/>
    <property type="match status" value="1"/>
</dbReference>
<sequence>MATGGLAKWVGAVQAFGHPSWSYVIKLRHGHVTMIERGFYELCGGENWNMLHELPGDNGLLEMWESRESMLESWSPGDGHSWAMAWAGWRAARETMQRRQYVNEPTFSCWSQSELGENGWHVHIIIGGPGLTRQNAAISRSILCTSFFKHLLITIRQRTHAPYTVLSRDELNAWNWLQKIAQRVMRGDMDDIVDILKCRKANGTLVAQAINGTEFITRYMLPKNRKVANTVLTRHTTPEQSYDSTWGKTYGFAVCNGETVSEFTRKDLWKVLYNIYTAHPAENMLNSNPSVWGDLPRVSANRIDADDAEARSRPIKLSRKQKIMAEVIQRATDGLLLTYNDLVVHLSDLMLMLEGMPGGSKTAEQLLTMIHIKLCAKYNAYEFMLMKTPATQNMNPGAPHYDCQGNLVFKLLNLQGYNPWQVGHWLVMMLSKKTGKRNSTLFYGPASTGKTNLAKAICHAVGLYGCVNHNNKQFPFNDAPNKMILWWEECIMTTDYVEAAKCVLGGTHVRVDVKHKDSRELPQIPVLLSSNHDVYTVVGGNATFGVHAAPLKERITQMNFMKQLPNTFGEITPGMISNWLSHCAHIHQEHLSLEGFAIKWDVQSVGNSFPLQTLCPGHSQNWTFSENGVCWHCGGFIQPTPESDTDSDGDPDPDGAVAGDSDTSANSESTVSFSSNDSGLGSVTSSAPSVPDRAEEIEEIPSECLEWMREEVDRLSAHDINSLAHQATGFILDPIPEEPEERERDLAREDAEPEASTSHTPATKRARVEEGEPWDGTQPITEGDWIDFESRQKRRRLEREEKGGEDEDMEVQESDPSAWGEKLGIVEKPGEEPIVLYCFETLPESDEEGDSDKENKTHTV</sequence>
<comment type="function">
    <text evidence="2">Multifunctional protein which displays endonuclease and helicase activities required for initiating and directing viral DNA replication. Also plays a role in viral packaging and transactivation of several promoters. Binds site-specifically to 2-3 approximate tandem copies within the origins of replication (Ori), unwinds this hairpin region and nicks one DNA strand thereby initiating the rolling circle replication (RCR). Becomes covalently attached to the 5' end of the nick and provides a 3'OH for priming DNA synthesis. The helicase activity unwinds DNA in a 3'-5' direction on the longer strand. Participates in the transcriptional regulation of several promoters.</text>
</comment>
<comment type="catalytic activity">
    <reaction evidence="2">
        <text>ATP + H2O = ADP + phosphate + H(+)</text>
        <dbReference type="Rhea" id="RHEA:13065"/>
        <dbReference type="ChEBI" id="CHEBI:15377"/>
        <dbReference type="ChEBI" id="CHEBI:15378"/>
        <dbReference type="ChEBI" id="CHEBI:30616"/>
        <dbReference type="ChEBI" id="CHEBI:43474"/>
        <dbReference type="ChEBI" id="CHEBI:456216"/>
        <dbReference type="EC" id="3.6.4.12"/>
    </reaction>
</comment>
<comment type="cofactor">
    <cofactor evidence="2">
        <name>Mg(2+)</name>
        <dbReference type="ChEBI" id="CHEBI:18420"/>
    </cofactor>
    <text evidence="2">The endonuclease active site can probably bind other divalent cations.</text>
</comment>
<comment type="subunit">
    <text evidence="3">Homooligomer; when bound to DNA.</text>
</comment>
<comment type="subcellular location">
    <subcellularLocation>
        <location evidence="1">Host nucleus</location>
    </subcellularLocation>
</comment>
<comment type="alternative products">
    <event type="alternative splicing"/>
    <isoform>
        <id>P07296-1</id>
        <name>NS1</name>
        <sequence type="displayed"/>
    </isoform>
    <isoform>
        <id>P07296-2</id>
        <name evidence="7">NS2</name>
        <sequence type="described" ref="VSP_061959"/>
    </isoform>
</comment>
<comment type="domain">
    <text evidence="3">In the N-terminus, the endonuclease region is involved in binding to the origin of replication. In the middle, there are the ATPase and helicase activities. The C-terminus probably contains a transactivation domain.</text>
</comment>
<comment type="similarity">
    <text evidence="8">Belongs to the parvoviruses initiator protein NS1 family.</text>
</comment>
<comment type="sequence caution" evidence="9">
    <conflict type="miscellaneous discrepancy">
        <sequence resource="EMBL-CDS" id="AAB59845"/>
    </conflict>
</comment>
<organismHost>
    <name type="scientific">Bos taurus</name>
    <name type="common">Bovine</name>
    <dbReference type="NCBI Taxonomy" id="9913"/>
</organismHost>
<accession>P07296</accession>
<accession>Q2LD58</accession>
<accession>Q2LD59</accession>
<protein>
    <recommendedName>
        <fullName evidence="2">Initiator protein NS1</fullName>
        <shortName>NS1</shortName>
        <ecNumber evidence="3">3.1.21.-</ecNumber>
        <ecNumber evidence="3">3.6.4.12</ecNumber>
    </recommendedName>
    <alternativeName>
        <fullName>Non-structural protein 1</fullName>
    </alternativeName>
    <alternativeName>
        <fullName>Non-structural protein NS1</fullName>
    </alternativeName>
</protein>
<gene>
    <name type="primary">NS1</name>
</gene>
<proteinExistence type="inferred from homology"/>
<organism>
    <name type="scientific">Bovine parvovirus 1</name>
    <name type="common">BPV-1</name>
    <dbReference type="NCBI Taxonomy" id="2839036"/>
    <lineage>
        <taxon>Viruses</taxon>
        <taxon>Monodnaviria</taxon>
        <taxon>Shotokuvirae</taxon>
        <taxon>Cossaviricota</taxon>
        <taxon>Quintoviricetes</taxon>
        <taxon>Piccovirales</taxon>
        <taxon>Parvoviridae</taxon>
        <taxon>Parvovirinae</taxon>
        <taxon>Bocaparvovirus</taxon>
        <taxon>Bocaparvovirus ungulate1</taxon>
    </lineage>
</organism>
<evidence type="ECO:0000250" key="1">
    <source>
        <dbReference type="UniProtKB" id="D0EZM8"/>
    </source>
</evidence>
<evidence type="ECO:0000250" key="2">
    <source>
        <dbReference type="UniProtKB" id="P03134"/>
    </source>
</evidence>
<evidence type="ECO:0000250" key="3">
    <source>
        <dbReference type="UniProtKB" id="Q9PZT1"/>
    </source>
</evidence>
<evidence type="ECO:0000255" key="4">
    <source>
        <dbReference type="PROSITE-ProRule" id="PRU00551"/>
    </source>
</evidence>
<evidence type="ECO:0000255" key="5">
    <source>
        <dbReference type="PROSITE-ProRule" id="PRU01366"/>
    </source>
</evidence>
<evidence type="ECO:0000256" key="6">
    <source>
        <dbReference type="SAM" id="MobiDB-lite"/>
    </source>
</evidence>
<evidence type="ECO:0000269" key="7">
    <source>
    </source>
</evidence>
<evidence type="ECO:0000305" key="8"/>
<evidence type="ECO:0000305" key="9">
    <source>
    </source>
</evidence>
<name>NS1_PAVBP</name>
<keyword id="KW-0025">Alternative splicing</keyword>
<keyword id="KW-0067">ATP-binding</keyword>
<keyword id="KW-0190">Covalent protein-DNA linkage</keyword>
<keyword id="KW-0235">DNA replication</keyword>
<keyword id="KW-0238">DNA-binding</keyword>
<keyword id="KW-0255">Endonuclease</keyword>
<keyword id="KW-0347">Helicase</keyword>
<keyword id="KW-1048">Host nucleus</keyword>
<keyword id="KW-0378">Hydrolase</keyword>
<keyword id="KW-0460">Magnesium</keyword>
<keyword id="KW-0479">Metal-binding</keyword>
<keyword id="KW-0511">Multifunctional enzyme</keyword>
<keyword id="KW-0540">Nuclease</keyword>
<keyword id="KW-0547">Nucleotide-binding</keyword>
<keyword id="KW-1185">Reference proteome</keyword>
<keyword id="KW-0804">Transcription</keyword>
<keyword id="KW-0805">Transcription regulation</keyword>
<keyword id="KW-1194">Viral DNA replication</keyword>
<reference key="1">
    <citation type="journal article" date="1986" name="J. Virol.">
        <title>Complete nucleotide sequence and genome organization of bovine parvovirus.</title>
        <authorList>
            <person name="Chen K.C."/>
            <person name="Shull B.C."/>
            <person name="Moses E.A."/>
            <person name="Lederman M."/>
            <person name="Stout E.R."/>
            <person name="Bates R.C."/>
        </authorList>
    </citation>
    <scope>NUCLEOTIDE SEQUENCE [GENOMIC DNA] (ISOFORM NS1)</scope>
</reference>
<reference key="2">
    <citation type="journal article" date="2007" name="J. Virol.">
        <title>The transcription profile of the bocavirus bovine parvovirus is unlike those of previously characterized parvoviruses.</title>
        <authorList>
            <person name="Qiu J."/>
            <person name="Cheng F."/>
            <person name="Johnson F.B."/>
            <person name="Pintel D."/>
        </authorList>
    </citation>
    <scope>NUCLEOTIDE SEQUENCE [LARGE SCALE GENOMIC DNA] (ISOFORMS NS1 AND NS2)</scope>
    <scope>ALTERNATIVE SPLICING</scope>
</reference>